<gene>
    <name evidence="1" type="primary">FEN1</name>
    <name evidence="3" type="ordered locus">Ot08g02290</name>
</gene>
<accession>Q013G9</accession>
<accession>A0A090M8N7</accession>
<comment type="function">
    <text evidence="1">Structure-specific nuclease with 5'-flap endonuclease and 5'-3' exonuclease activities involved in DNA replication and repair. During DNA replication, cleaves the 5'-overhanging flap structure that is generated by displacement synthesis when DNA polymerase encounters the 5'-end of a downstream Okazaki fragment. It enters the flap from the 5'-end and then tracks to cleave the flap base, leaving a nick for ligation. Also involved in the long patch base excision repair (LP-BER) pathway, by cleaving within the apurinic/apyrimidinic (AP) site-terminated flap. Acts as a genome stabilization factor that prevents flaps from equilibrating into structures that lead to duplications and deletions. Also possesses 5'-3' exonuclease activity on nicked or gapped double-stranded DNA, and exhibits RNase H activity. Also involved in replication and repair of rDNA and in repairing mitochondrial DNA.</text>
</comment>
<comment type="cofactor">
    <cofactor evidence="1">
        <name>Mg(2+)</name>
        <dbReference type="ChEBI" id="CHEBI:18420"/>
    </cofactor>
    <text evidence="1">Binds 2 magnesium ions per subunit. They probably participate in the reaction catalyzed by the enzyme. May bind an additional third magnesium ion after substrate binding.</text>
</comment>
<comment type="subunit">
    <text evidence="1">Interacts with PCNA. Three molecules of FEN1 bind to one PCNA trimer with each molecule binding to one PCNA monomer. PCNA stimulates the nuclease activity without altering cleavage specificity.</text>
</comment>
<comment type="subcellular location">
    <subcellularLocation>
        <location evidence="1">Nucleus</location>
        <location evidence="1">Nucleolus</location>
    </subcellularLocation>
    <subcellularLocation>
        <location evidence="1">Nucleus</location>
        <location evidence="1">Nucleoplasm</location>
    </subcellularLocation>
    <subcellularLocation>
        <location evidence="1">Mitochondrion</location>
    </subcellularLocation>
    <text evidence="1">Resides mostly in the nucleoli and relocalizes to the nucleoplasm upon DNA damage.</text>
</comment>
<comment type="PTM">
    <text evidence="1">Phosphorylated. Phosphorylation upon DNA damage induces relocalization to the nuclear plasma.</text>
</comment>
<comment type="similarity">
    <text evidence="1">Belongs to the XPG/RAD2 endonuclease family. FEN1 subfamily.</text>
</comment>
<protein>
    <recommendedName>
        <fullName evidence="1">Flap endonuclease 1</fullName>
        <shortName evidence="1">FEN-1</shortName>
        <ecNumber evidence="1">3.1.-.-</ecNumber>
    </recommendedName>
    <alternativeName>
        <fullName evidence="1">Flap structure-specific endonuclease 1</fullName>
    </alternativeName>
</protein>
<reference key="1">
    <citation type="journal article" date="2006" name="Proc. Natl. Acad. Sci. U.S.A.">
        <title>Genome analysis of the smallest free-living eukaryote Ostreococcus tauri unveils many unique features.</title>
        <authorList>
            <person name="Derelle E."/>
            <person name="Ferraz C."/>
            <person name="Rombauts S."/>
            <person name="Rouze P."/>
            <person name="Worden A.Z."/>
            <person name="Robbens S."/>
            <person name="Partensky F."/>
            <person name="Degroeve S."/>
            <person name="Echeynie S."/>
            <person name="Cooke R."/>
            <person name="Saeys Y."/>
            <person name="Wuyts J."/>
            <person name="Jabbari K."/>
            <person name="Bowler C."/>
            <person name="Panaud O."/>
            <person name="Piegu B."/>
            <person name="Ball S.G."/>
            <person name="Ral J.-P."/>
            <person name="Bouget F.-Y."/>
            <person name="Piganeau G."/>
            <person name="De Baets B."/>
            <person name="Picard A."/>
            <person name="Delseny M."/>
            <person name="Demaille J."/>
            <person name="Van de Peer Y."/>
            <person name="Moreau H."/>
        </authorList>
    </citation>
    <scope>NUCLEOTIDE SEQUENCE [LARGE SCALE GENOMIC DNA]</scope>
    <source>
        <strain>OTTH0595</strain>
    </source>
</reference>
<sequence length="389" mass="42703">MGIKGLTALLSENAPGAMREQKFTSYLDRRVAIDASMHIYQFMIAVGRTGEQTLTNEAGEVTSHLQGMLMRTSRMLEAGIKPVYVFDGKPPTMKGGELAKRKDKREEAEAALKAAREAGNQEEVEKLSKRTVRVSKEQSMEVMKLAQLLGIPAFEAPCEAEATCAAMCKAGLVWAVGTEDMDTLTFAAPRVARNLMAPKSAEKPVLEFDYEKTIAGLGLTADQFIDLCILCGCDYTDTIRGVGPKTALKLIKEHGSIEKILEAIDTEKYPPPKDWEFAGARELFKNPEVMDVSGINLSWKAPDEEGLVEFLVKEKQFQEDRVRGVCARIRKARQGAASQNRLESFFGPPKIISSTIGKRKVEETKSGKGSKAGLNKKSKGVSGYKSKKT</sequence>
<keyword id="KW-0227">DNA damage</keyword>
<keyword id="KW-0234">DNA repair</keyword>
<keyword id="KW-0235">DNA replication</keyword>
<keyword id="KW-0255">Endonuclease</keyword>
<keyword id="KW-0269">Exonuclease</keyword>
<keyword id="KW-0378">Hydrolase</keyword>
<keyword id="KW-0460">Magnesium</keyword>
<keyword id="KW-0479">Metal-binding</keyword>
<keyword id="KW-0496">Mitochondrion</keyword>
<keyword id="KW-0540">Nuclease</keyword>
<keyword id="KW-0539">Nucleus</keyword>
<keyword id="KW-0597">Phosphoprotein</keyword>
<keyword id="KW-1185">Reference proteome</keyword>
<evidence type="ECO:0000255" key="1">
    <source>
        <dbReference type="HAMAP-Rule" id="MF_03140"/>
    </source>
</evidence>
<evidence type="ECO:0000256" key="2">
    <source>
        <dbReference type="SAM" id="MobiDB-lite"/>
    </source>
</evidence>
<evidence type="ECO:0000312" key="3">
    <source>
        <dbReference type="EMBL" id="CEG01489.1"/>
    </source>
</evidence>
<dbReference type="EC" id="3.1.-.-" evidence="1"/>
<dbReference type="EMBL" id="CAID01000008">
    <property type="protein sequence ID" value="CEG01489.1"/>
    <property type="molecule type" value="Genomic_DNA"/>
</dbReference>
<dbReference type="SMR" id="Q013G9"/>
<dbReference type="FunCoup" id="Q013G9">
    <property type="interactions" value="1684"/>
</dbReference>
<dbReference type="STRING" id="70448.Q013G9"/>
<dbReference type="eggNOG" id="KOG2519">
    <property type="taxonomic scope" value="Eukaryota"/>
</dbReference>
<dbReference type="InParanoid" id="Q013G9"/>
<dbReference type="OrthoDB" id="1937206at2759"/>
<dbReference type="Proteomes" id="UP000009170">
    <property type="component" value="Chromosome 8"/>
</dbReference>
<dbReference type="GO" id="GO:0005739">
    <property type="term" value="C:mitochondrion"/>
    <property type="evidence" value="ECO:0007669"/>
    <property type="project" value="UniProtKB-SubCell"/>
</dbReference>
<dbReference type="GO" id="GO:0005730">
    <property type="term" value="C:nucleolus"/>
    <property type="evidence" value="ECO:0007669"/>
    <property type="project" value="UniProtKB-SubCell"/>
</dbReference>
<dbReference type="GO" id="GO:0005654">
    <property type="term" value="C:nucleoplasm"/>
    <property type="evidence" value="ECO:0007669"/>
    <property type="project" value="UniProtKB-SubCell"/>
</dbReference>
<dbReference type="GO" id="GO:0008409">
    <property type="term" value="F:5'-3' exonuclease activity"/>
    <property type="evidence" value="ECO:0007669"/>
    <property type="project" value="UniProtKB-UniRule"/>
</dbReference>
<dbReference type="GO" id="GO:0017108">
    <property type="term" value="F:5'-flap endonuclease activity"/>
    <property type="evidence" value="ECO:0007669"/>
    <property type="project" value="UniProtKB-UniRule"/>
</dbReference>
<dbReference type="GO" id="GO:0003677">
    <property type="term" value="F:DNA binding"/>
    <property type="evidence" value="ECO:0007669"/>
    <property type="project" value="UniProtKB-UniRule"/>
</dbReference>
<dbReference type="GO" id="GO:0000287">
    <property type="term" value="F:magnesium ion binding"/>
    <property type="evidence" value="ECO:0007669"/>
    <property type="project" value="UniProtKB-UniRule"/>
</dbReference>
<dbReference type="GO" id="GO:0006284">
    <property type="term" value="P:base-excision repair"/>
    <property type="evidence" value="ECO:0007669"/>
    <property type="project" value="UniProtKB-UniRule"/>
</dbReference>
<dbReference type="GO" id="GO:0043137">
    <property type="term" value="P:DNA replication, removal of RNA primer"/>
    <property type="evidence" value="ECO:0007669"/>
    <property type="project" value="UniProtKB-UniRule"/>
</dbReference>
<dbReference type="CDD" id="cd09867">
    <property type="entry name" value="PIN_FEN1"/>
    <property type="match status" value="1"/>
</dbReference>
<dbReference type="FunFam" id="1.10.150.20:FF:000009">
    <property type="entry name" value="Flap endonuclease 1"/>
    <property type="match status" value="1"/>
</dbReference>
<dbReference type="FunFam" id="3.40.50.1010:FF:000016">
    <property type="entry name" value="Flap endonuclease 1"/>
    <property type="match status" value="1"/>
</dbReference>
<dbReference type="Gene3D" id="1.10.150.20">
    <property type="entry name" value="5' to 3' exonuclease, C-terminal subdomain"/>
    <property type="match status" value="1"/>
</dbReference>
<dbReference type="Gene3D" id="3.40.50.1010">
    <property type="entry name" value="5'-nuclease"/>
    <property type="match status" value="1"/>
</dbReference>
<dbReference type="HAMAP" id="MF_00614">
    <property type="entry name" value="Fen"/>
    <property type="match status" value="1"/>
</dbReference>
<dbReference type="InterPro" id="IPR002421">
    <property type="entry name" value="5-3_exonuclease"/>
</dbReference>
<dbReference type="InterPro" id="IPR036279">
    <property type="entry name" value="5-3_exonuclease_C_sf"/>
</dbReference>
<dbReference type="InterPro" id="IPR023426">
    <property type="entry name" value="Flap_endonuc"/>
</dbReference>
<dbReference type="InterPro" id="IPR008918">
    <property type="entry name" value="HhH2"/>
</dbReference>
<dbReference type="InterPro" id="IPR029060">
    <property type="entry name" value="PIN-like_dom_sf"/>
</dbReference>
<dbReference type="InterPro" id="IPR006086">
    <property type="entry name" value="XPG-I_dom"/>
</dbReference>
<dbReference type="InterPro" id="IPR006084">
    <property type="entry name" value="XPG/Rad2"/>
</dbReference>
<dbReference type="InterPro" id="IPR019974">
    <property type="entry name" value="XPG_CS"/>
</dbReference>
<dbReference type="InterPro" id="IPR006085">
    <property type="entry name" value="XPG_DNA_repair_N"/>
</dbReference>
<dbReference type="PANTHER" id="PTHR11081:SF9">
    <property type="entry name" value="FLAP ENDONUCLEASE 1"/>
    <property type="match status" value="1"/>
</dbReference>
<dbReference type="PANTHER" id="PTHR11081">
    <property type="entry name" value="FLAP ENDONUCLEASE FAMILY MEMBER"/>
    <property type="match status" value="1"/>
</dbReference>
<dbReference type="Pfam" id="PF00867">
    <property type="entry name" value="XPG_I"/>
    <property type="match status" value="1"/>
</dbReference>
<dbReference type="Pfam" id="PF00752">
    <property type="entry name" value="XPG_N"/>
    <property type="match status" value="1"/>
</dbReference>
<dbReference type="PRINTS" id="PR00853">
    <property type="entry name" value="XPGRADSUPER"/>
</dbReference>
<dbReference type="SMART" id="SM00475">
    <property type="entry name" value="53EXOc"/>
    <property type="match status" value="1"/>
</dbReference>
<dbReference type="SMART" id="SM00279">
    <property type="entry name" value="HhH2"/>
    <property type="match status" value="1"/>
</dbReference>
<dbReference type="SMART" id="SM00484">
    <property type="entry name" value="XPGI"/>
    <property type="match status" value="1"/>
</dbReference>
<dbReference type="SMART" id="SM00485">
    <property type="entry name" value="XPGN"/>
    <property type="match status" value="1"/>
</dbReference>
<dbReference type="SUPFAM" id="SSF47807">
    <property type="entry name" value="5' to 3' exonuclease, C-terminal subdomain"/>
    <property type="match status" value="1"/>
</dbReference>
<dbReference type="SUPFAM" id="SSF88723">
    <property type="entry name" value="PIN domain-like"/>
    <property type="match status" value="1"/>
</dbReference>
<dbReference type="PROSITE" id="PS00841">
    <property type="entry name" value="XPG_1"/>
    <property type="match status" value="1"/>
</dbReference>
<feature type="chain" id="PRO_0000403525" description="Flap endonuclease 1">
    <location>
        <begin position="1"/>
        <end position="389"/>
    </location>
</feature>
<feature type="region of interest" description="N-domain">
    <location>
        <begin position="1"/>
        <end position="105"/>
    </location>
</feature>
<feature type="region of interest" description="I-domain">
    <location>
        <begin position="123"/>
        <end position="254"/>
    </location>
</feature>
<feature type="region of interest" description="Interaction with PCNA" evidence="1">
    <location>
        <begin position="338"/>
        <end position="346"/>
    </location>
</feature>
<feature type="region of interest" description="Disordered" evidence="2">
    <location>
        <begin position="356"/>
        <end position="389"/>
    </location>
</feature>
<feature type="compositionally biased region" description="Basic residues" evidence="2">
    <location>
        <begin position="374"/>
        <end position="389"/>
    </location>
</feature>
<feature type="binding site" evidence="1">
    <location>
        <position position="34"/>
    </location>
    <ligand>
        <name>Mg(2+)</name>
        <dbReference type="ChEBI" id="CHEBI:18420"/>
        <label>1</label>
    </ligand>
</feature>
<feature type="binding site" evidence="1">
    <location>
        <position position="71"/>
    </location>
    <ligand>
        <name>DNA</name>
        <dbReference type="ChEBI" id="CHEBI:16991"/>
    </ligand>
</feature>
<feature type="binding site" evidence="1">
    <location>
        <position position="87"/>
    </location>
    <ligand>
        <name>Mg(2+)</name>
        <dbReference type="ChEBI" id="CHEBI:18420"/>
        <label>1</label>
    </ligand>
</feature>
<feature type="binding site" evidence="1">
    <location>
        <position position="159"/>
    </location>
    <ligand>
        <name>DNA</name>
        <dbReference type="ChEBI" id="CHEBI:16991"/>
    </ligand>
</feature>
<feature type="binding site" evidence="1">
    <location>
        <position position="159"/>
    </location>
    <ligand>
        <name>Mg(2+)</name>
        <dbReference type="ChEBI" id="CHEBI:18420"/>
        <label>1</label>
    </ligand>
</feature>
<feature type="binding site" evidence="1">
    <location>
        <position position="161"/>
    </location>
    <ligand>
        <name>Mg(2+)</name>
        <dbReference type="ChEBI" id="CHEBI:18420"/>
        <label>1</label>
    </ligand>
</feature>
<feature type="binding site" evidence="1">
    <location>
        <position position="180"/>
    </location>
    <ligand>
        <name>Mg(2+)</name>
        <dbReference type="ChEBI" id="CHEBI:18420"/>
        <label>2</label>
    </ligand>
</feature>
<feature type="binding site" evidence="1">
    <location>
        <position position="182"/>
    </location>
    <ligand>
        <name>Mg(2+)</name>
        <dbReference type="ChEBI" id="CHEBI:18420"/>
        <label>2</label>
    </ligand>
</feature>
<feature type="binding site" evidence="1">
    <location>
        <position position="232"/>
    </location>
    <ligand>
        <name>DNA</name>
        <dbReference type="ChEBI" id="CHEBI:16991"/>
    </ligand>
</feature>
<feature type="binding site" evidence="1">
    <location>
        <position position="234"/>
    </location>
    <ligand>
        <name>DNA</name>
        <dbReference type="ChEBI" id="CHEBI:16991"/>
    </ligand>
</feature>
<feature type="binding site" evidence="1">
    <location>
        <position position="234"/>
    </location>
    <ligand>
        <name>Mg(2+)</name>
        <dbReference type="ChEBI" id="CHEBI:18420"/>
        <label>2</label>
    </ligand>
</feature>
<name>FEN1_OSTTA</name>
<organism>
    <name type="scientific">Ostreococcus tauri</name>
    <dbReference type="NCBI Taxonomy" id="70448"/>
    <lineage>
        <taxon>Eukaryota</taxon>
        <taxon>Viridiplantae</taxon>
        <taxon>Chlorophyta</taxon>
        <taxon>Mamiellophyceae</taxon>
        <taxon>Mamiellales</taxon>
        <taxon>Bathycoccaceae</taxon>
        <taxon>Ostreococcus</taxon>
    </lineage>
</organism>
<proteinExistence type="inferred from homology"/>